<proteinExistence type="inferred from homology"/>
<reference key="1">
    <citation type="journal article" date="2005" name="Proc. Natl. Acad. Sci. U.S.A.">
        <title>Complete genome sequence of Vibrio fischeri: a symbiotic bacterium with pathogenic congeners.</title>
        <authorList>
            <person name="Ruby E.G."/>
            <person name="Urbanowski M."/>
            <person name="Campbell J."/>
            <person name="Dunn A."/>
            <person name="Faini M."/>
            <person name="Gunsalus R."/>
            <person name="Lostroh P."/>
            <person name="Lupp C."/>
            <person name="McCann J."/>
            <person name="Millikan D."/>
            <person name="Schaefer A."/>
            <person name="Stabb E."/>
            <person name="Stevens A."/>
            <person name="Visick K."/>
            <person name="Whistler C."/>
            <person name="Greenberg E.P."/>
        </authorList>
    </citation>
    <scope>NUCLEOTIDE SEQUENCE [LARGE SCALE GENOMIC DNA]</scope>
    <source>
        <strain>ATCC 700601 / ES114</strain>
    </source>
</reference>
<organism>
    <name type="scientific">Aliivibrio fischeri (strain ATCC 700601 / ES114)</name>
    <name type="common">Vibrio fischeri</name>
    <dbReference type="NCBI Taxonomy" id="312309"/>
    <lineage>
        <taxon>Bacteria</taxon>
        <taxon>Pseudomonadati</taxon>
        <taxon>Pseudomonadota</taxon>
        <taxon>Gammaproteobacteria</taxon>
        <taxon>Vibrionales</taxon>
        <taxon>Vibrionaceae</taxon>
        <taxon>Aliivibrio</taxon>
    </lineage>
</organism>
<comment type="function">
    <text evidence="1">ATP-dependent specificity component of the Clp protease. It directs the protease to specific substrates. Can perform chaperone functions in the absence of ClpP.</text>
</comment>
<comment type="subunit">
    <text evidence="1">Component of the ClpX-ClpP complex. Forms a hexameric ring that, in the presence of ATP, binds to fourteen ClpP subunits assembled into a disk-like structure with a central cavity, resembling the structure of eukaryotic proteasomes.</text>
</comment>
<comment type="similarity">
    <text evidence="1">Belongs to the ClpX chaperone family.</text>
</comment>
<keyword id="KW-0067">ATP-binding</keyword>
<keyword id="KW-0143">Chaperone</keyword>
<keyword id="KW-0479">Metal-binding</keyword>
<keyword id="KW-0547">Nucleotide-binding</keyword>
<keyword id="KW-1185">Reference proteome</keyword>
<keyword id="KW-0862">Zinc</keyword>
<evidence type="ECO:0000255" key="1">
    <source>
        <dbReference type="HAMAP-Rule" id="MF_00175"/>
    </source>
</evidence>
<evidence type="ECO:0000255" key="2">
    <source>
        <dbReference type="PROSITE-ProRule" id="PRU01250"/>
    </source>
</evidence>
<dbReference type="EMBL" id="CP000020">
    <property type="protein sequence ID" value="AAW85292.1"/>
    <property type="molecule type" value="Genomic_DNA"/>
</dbReference>
<dbReference type="RefSeq" id="WP_005418253.1">
    <property type="nucleotide sequence ID" value="NZ_CAWLES010000001.1"/>
</dbReference>
<dbReference type="RefSeq" id="YP_204180.1">
    <property type="nucleotide sequence ID" value="NC_006840.2"/>
</dbReference>
<dbReference type="SMR" id="Q5E6Q4"/>
<dbReference type="STRING" id="312309.VF_0797"/>
<dbReference type="EnsemblBacteria" id="AAW85292">
    <property type="protein sequence ID" value="AAW85292"/>
    <property type="gene ID" value="VF_0797"/>
</dbReference>
<dbReference type="GeneID" id="54163465"/>
<dbReference type="KEGG" id="vfi:VF_0797"/>
<dbReference type="PATRIC" id="fig|312309.11.peg.789"/>
<dbReference type="eggNOG" id="COG1219">
    <property type="taxonomic scope" value="Bacteria"/>
</dbReference>
<dbReference type="HOGENOM" id="CLU_014218_8_2_6"/>
<dbReference type="OrthoDB" id="9804062at2"/>
<dbReference type="Proteomes" id="UP000000537">
    <property type="component" value="Chromosome I"/>
</dbReference>
<dbReference type="GO" id="GO:0009376">
    <property type="term" value="C:HslUV protease complex"/>
    <property type="evidence" value="ECO:0007669"/>
    <property type="project" value="TreeGrafter"/>
</dbReference>
<dbReference type="GO" id="GO:0005524">
    <property type="term" value="F:ATP binding"/>
    <property type="evidence" value="ECO:0007669"/>
    <property type="project" value="UniProtKB-UniRule"/>
</dbReference>
<dbReference type="GO" id="GO:0016887">
    <property type="term" value="F:ATP hydrolysis activity"/>
    <property type="evidence" value="ECO:0007669"/>
    <property type="project" value="InterPro"/>
</dbReference>
<dbReference type="GO" id="GO:0140662">
    <property type="term" value="F:ATP-dependent protein folding chaperone"/>
    <property type="evidence" value="ECO:0007669"/>
    <property type="project" value="InterPro"/>
</dbReference>
<dbReference type="GO" id="GO:0046983">
    <property type="term" value="F:protein dimerization activity"/>
    <property type="evidence" value="ECO:0007669"/>
    <property type="project" value="InterPro"/>
</dbReference>
<dbReference type="GO" id="GO:0051082">
    <property type="term" value="F:unfolded protein binding"/>
    <property type="evidence" value="ECO:0007669"/>
    <property type="project" value="UniProtKB-UniRule"/>
</dbReference>
<dbReference type="GO" id="GO:0008270">
    <property type="term" value="F:zinc ion binding"/>
    <property type="evidence" value="ECO:0007669"/>
    <property type="project" value="InterPro"/>
</dbReference>
<dbReference type="GO" id="GO:0051301">
    <property type="term" value="P:cell division"/>
    <property type="evidence" value="ECO:0007669"/>
    <property type="project" value="TreeGrafter"/>
</dbReference>
<dbReference type="GO" id="GO:0051603">
    <property type="term" value="P:proteolysis involved in protein catabolic process"/>
    <property type="evidence" value="ECO:0007669"/>
    <property type="project" value="TreeGrafter"/>
</dbReference>
<dbReference type="CDD" id="cd19497">
    <property type="entry name" value="RecA-like_ClpX"/>
    <property type="match status" value="1"/>
</dbReference>
<dbReference type="FunFam" id="1.10.8.60:FF:000002">
    <property type="entry name" value="ATP-dependent Clp protease ATP-binding subunit ClpX"/>
    <property type="match status" value="1"/>
</dbReference>
<dbReference type="FunFam" id="3.40.50.300:FF:000005">
    <property type="entry name" value="ATP-dependent Clp protease ATP-binding subunit ClpX"/>
    <property type="match status" value="1"/>
</dbReference>
<dbReference type="Gene3D" id="1.10.8.60">
    <property type="match status" value="1"/>
</dbReference>
<dbReference type="Gene3D" id="6.20.220.10">
    <property type="entry name" value="ClpX chaperone, C4-type zinc finger domain"/>
    <property type="match status" value="1"/>
</dbReference>
<dbReference type="Gene3D" id="3.40.50.300">
    <property type="entry name" value="P-loop containing nucleotide triphosphate hydrolases"/>
    <property type="match status" value="1"/>
</dbReference>
<dbReference type="HAMAP" id="MF_00175">
    <property type="entry name" value="ClpX"/>
    <property type="match status" value="1"/>
</dbReference>
<dbReference type="InterPro" id="IPR003593">
    <property type="entry name" value="AAA+_ATPase"/>
</dbReference>
<dbReference type="InterPro" id="IPR050052">
    <property type="entry name" value="ATP-dep_Clp_protease_ClpX"/>
</dbReference>
<dbReference type="InterPro" id="IPR003959">
    <property type="entry name" value="ATPase_AAA_core"/>
</dbReference>
<dbReference type="InterPro" id="IPR019489">
    <property type="entry name" value="Clp_ATPase_C"/>
</dbReference>
<dbReference type="InterPro" id="IPR004487">
    <property type="entry name" value="Clp_protease_ATP-bd_su_ClpX"/>
</dbReference>
<dbReference type="InterPro" id="IPR046425">
    <property type="entry name" value="ClpX_bact"/>
</dbReference>
<dbReference type="InterPro" id="IPR027417">
    <property type="entry name" value="P-loop_NTPase"/>
</dbReference>
<dbReference type="InterPro" id="IPR010603">
    <property type="entry name" value="Znf_CppX_C4"/>
</dbReference>
<dbReference type="InterPro" id="IPR038366">
    <property type="entry name" value="Znf_CppX_C4_sf"/>
</dbReference>
<dbReference type="NCBIfam" id="TIGR00382">
    <property type="entry name" value="clpX"/>
    <property type="match status" value="1"/>
</dbReference>
<dbReference type="NCBIfam" id="NF003745">
    <property type="entry name" value="PRK05342.1"/>
    <property type="match status" value="1"/>
</dbReference>
<dbReference type="PANTHER" id="PTHR48102:SF7">
    <property type="entry name" value="ATP-DEPENDENT CLP PROTEASE ATP-BINDING SUBUNIT CLPX-LIKE, MITOCHONDRIAL"/>
    <property type="match status" value="1"/>
</dbReference>
<dbReference type="PANTHER" id="PTHR48102">
    <property type="entry name" value="ATP-DEPENDENT CLP PROTEASE ATP-BINDING SUBUNIT CLPX-LIKE, MITOCHONDRIAL-RELATED"/>
    <property type="match status" value="1"/>
</dbReference>
<dbReference type="Pfam" id="PF07724">
    <property type="entry name" value="AAA_2"/>
    <property type="match status" value="1"/>
</dbReference>
<dbReference type="Pfam" id="PF10431">
    <property type="entry name" value="ClpB_D2-small"/>
    <property type="match status" value="1"/>
</dbReference>
<dbReference type="Pfam" id="PF06689">
    <property type="entry name" value="zf-C4_ClpX"/>
    <property type="match status" value="1"/>
</dbReference>
<dbReference type="SMART" id="SM00382">
    <property type="entry name" value="AAA"/>
    <property type="match status" value="1"/>
</dbReference>
<dbReference type="SMART" id="SM01086">
    <property type="entry name" value="ClpB_D2-small"/>
    <property type="match status" value="1"/>
</dbReference>
<dbReference type="SMART" id="SM00994">
    <property type="entry name" value="zf-C4_ClpX"/>
    <property type="match status" value="1"/>
</dbReference>
<dbReference type="SUPFAM" id="SSF57716">
    <property type="entry name" value="Glucocorticoid receptor-like (DNA-binding domain)"/>
    <property type="match status" value="1"/>
</dbReference>
<dbReference type="SUPFAM" id="SSF52540">
    <property type="entry name" value="P-loop containing nucleoside triphosphate hydrolases"/>
    <property type="match status" value="1"/>
</dbReference>
<dbReference type="PROSITE" id="PS51902">
    <property type="entry name" value="CLPX_ZB"/>
    <property type="match status" value="1"/>
</dbReference>
<protein>
    <recommendedName>
        <fullName evidence="1">ATP-dependent Clp protease ATP-binding subunit ClpX</fullName>
    </recommendedName>
</protein>
<accession>Q5E6Q4</accession>
<sequence>MTDKRKDENSGKLLYCSFCGKSQHEVRKLIAGPSVYVCDECVDLCNDIIREELKDNTLSPKESSEELPTPRNIREHLDDYVIGQEHAKKVLAVAVYNHYKRLRNGDTTKDGVELGKSNILLIGPTGSGKTLLAETLARFLDVPFTMADATTLTEAGYVGEDVENIIQKLLQKCDYDPAKAERGIVYIDEIDKISRKSENPSITRDVSGEGVQQALLKLIEGTIASVPPQGGRKHPQQEFLQVDTSKILFICGGAFAGLDKVIEQRVATGTGIGFGADVRSKENEATIGDLFKQIEPEDLVKFGLIPEFIGRLPVTTTLTELDEEALVQILSQPKNALTKQYGALFDLEGAELEFREDALKAIAKKAMDRKTGARGLRSILEAVLLETMYELPSKEGVSKVVIDESVINGESEPLLIFENTETKAISAE</sequence>
<name>CLPX_ALIF1</name>
<feature type="chain" id="PRO_1000024697" description="ATP-dependent Clp protease ATP-binding subunit ClpX">
    <location>
        <begin position="1"/>
        <end position="428"/>
    </location>
</feature>
<feature type="domain" description="ClpX-type ZB" evidence="2">
    <location>
        <begin position="4"/>
        <end position="57"/>
    </location>
</feature>
<feature type="binding site" evidence="2">
    <location>
        <position position="16"/>
    </location>
    <ligand>
        <name>Zn(2+)</name>
        <dbReference type="ChEBI" id="CHEBI:29105"/>
    </ligand>
</feature>
<feature type="binding site" evidence="2">
    <location>
        <position position="19"/>
    </location>
    <ligand>
        <name>Zn(2+)</name>
        <dbReference type="ChEBI" id="CHEBI:29105"/>
    </ligand>
</feature>
<feature type="binding site" evidence="2">
    <location>
        <position position="38"/>
    </location>
    <ligand>
        <name>Zn(2+)</name>
        <dbReference type="ChEBI" id="CHEBI:29105"/>
    </ligand>
</feature>
<feature type="binding site" evidence="2">
    <location>
        <position position="41"/>
    </location>
    <ligand>
        <name>Zn(2+)</name>
        <dbReference type="ChEBI" id="CHEBI:29105"/>
    </ligand>
</feature>
<feature type="binding site" evidence="1">
    <location>
        <begin position="124"/>
        <end position="131"/>
    </location>
    <ligand>
        <name>ATP</name>
        <dbReference type="ChEBI" id="CHEBI:30616"/>
    </ligand>
</feature>
<gene>
    <name evidence="1" type="primary">clpX</name>
    <name type="ordered locus">VF_0797</name>
</gene>